<reference key="1">
    <citation type="journal article" date="2001" name="J. Dairy Sci.">
        <title>Purification of MUC1 from bovine milk-fat globules and characterization of a corresponding full-length cDNA clone.</title>
        <authorList>
            <person name="Pallesen L.T."/>
            <person name="Andersen M.H."/>
            <person name="Nielsen R.L."/>
            <person name="Berglund L."/>
            <person name="Rasmussen L.K."/>
            <person name="Petersen T.E."/>
            <person name="Rasmussen J.T."/>
        </authorList>
    </citation>
    <scope>NUCLEOTIDE SEQUENCE [MRNA]</scope>
    <scope>PROTEIN SEQUENCE OF 23-35; 256-264; 276-282; 371-373; 387-397; 402-426 AND 523-528</scope>
    <scope>GLYCOSYLATION</scope>
    <scope>STRUCTURE OF CARBOHYDRATE</scope>
    <source>
        <strain>Holstein</strain>
        <tissue>Lactating mammary gland</tissue>
    </source>
</reference>
<reference key="2">
    <citation type="journal article" date="2002" name="J. Anim. Breed. Genet.">
        <title>Molecular analysis of the length polymorphic MUC1 gene in cattle.</title>
        <authorList>
            <person name="Rasero R."/>
            <person name="Sacchi P."/>
            <person name="Rosati S."/>
            <person name="Cauvin E."/>
            <person name="Maione S."/>
        </authorList>
    </citation>
    <scope>NUCLEOTIDE SEQUENCE [GENOMIC DNA] OF 1-554</scope>
    <scope>POLYMORPHISM</scope>
    <source>
        <strain>Friesian</strain>
        <tissue>Blood</tissue>
    </source>
</reference>
<reference key="3">
    <citation type="journal article" date="2006" name="Cytogenet. Genome Res.">
        <title>Comparative FISH mapping of mucin 1, transmembrane (MUC1) among cattle, river buffalo, sheep and goat chromosomes: comparison between bovine chromosome 3 and human chromosome 1.</title>
        <authorList>
            <person name="Perucatti A."/>
            <person name="Floriot S."/>
            <person name="Di Meo G.P."/>
            <person name="Soglia D."/>
            <person name="Rullo R."/>
            <person name="Maione S."/>
            <person name="Incarnato D."/>
            <person name="Eggen A."/>
            <person name="Sacchi P."/>
            <person name="Rasero R."/>
            <person name="Iannuzzi L."/>
        </authorList>
    </citation>
    <scope>NUCLEOTIDE SEQUENCE [GENOMIC DNA] OF 1-554</scope>
</reference>
<reference key="4">
    <citation type="journal article" date="2005" name="J. Dairy Sci.">
        <title>Distribution and carbohydrate structures of high molecular weight glycoproteins, MUC1 and MUCX, in bovine milk.</title>
        <authorList>
            <person name="Liu C."/>
            <person name="Erickson A.K."/>
            <person name="Henning D.R."/>
        </authorList>
    </citation>
    <scope>GLYCOSYLATION</scope>
</reference>
<accession>Q8WML4</accession>
<accession>Q95L89</accession>
<proteinExistence type="evidence at protein level"/>
<evidence type="ECO:0000250" key="1"/>
<evidence type="ECO:0000250" key="2">
    <source>
        <dbReference type="UniProtKB" id="P15941"/>
    </source>
</evidence>
<evidence type="ECO:0000255" key="3"/>
<evidence type="ECO:0000255" key="4">
    <source>
        <dbReference type="PROSITE-ProRule" id="PRU00188"/>
    </source>
</evidence>
<evidence type="ECO:0000256" key="5">
    <source>
        <dbReference type="SAM" id="MobiDB-lite"/>
    </source>
</evidence>
<evidence type="ECO:0000269" key="6">
    <source>
    </source>
</evidence>
<evidence type="ECO:0000269" key="7">
    <source>
    </source>
</evidence>
<evidence type="ECO:0000305" key="8"/>
<keyword id="KW-0068">Autocatalytic cleavage</keyword>
<keyword id="KW-1003">Cell membrane</keyword>
<keyword id="KW-0963">Cytoplasm</keyword>
<keyword id="KW-0903">Direct protein sequencing</keyword>
<keyword id="KW-0325">Glycoprotein</keyword>
<keyword id="KW-0449">Lipoprotein</keyword>
<keyword id="KW-0472">Membrane</keyword>
<keyword id="KW-0539">Nucleus</keyword>
<keyword id="KW-0564">Palmitate</keyword>
<keyword id="KW-0597">Phosphoprotein</keyword>
<keyword id="KW-1185">Reference proteome</keyword>
<keyword id="KW-0677">Repeat</keyword>
<keyword id="KW-0732">Signal</keyword>
<keyword id="KW-0812">Transmembrane</keyword>
<keyword id="KW-1133">Transmembrane helix</keyword>
<name>MUC1_BOVIN</name>
<gene>
    <name type="primary">MUC1</name>
</gene>
<protein>
    <recommendedName>
        <fullName>Mucin-1</fullName>
        <shortName>MUC-1</shortName>
    </recommendedName>
    <cdAntigenName>CD227</cdAntigenName>
    <component>
        <recommendedName>
            <fullName>Mucin-1 subunit alpha</fullName>
            <shortName>MUC1-NT</shortName>
            <shortName>MUC1-alpha</shortName>
        </recommendedName>
    </component>
    <component>
        <recommendedName>
            <fullName>Mucin-1 subunit beta</fullName>
            <shortName>MUC1-beta</shortName>
        </recommendedName>
        <alternativeName>
            <fullName>MUC1-CT</fullName>
        </alternativeName>
    </component>
</protein>
<comment type="function">
    <text evidence="1">The alpha subunit has cell adhesive properties. May provide a protective layer on epithelial cells against bacterial and enzyme attack (By similarity).</text>
</comment>
<comment type="function">
    <text evidence="1">The beta subunit contains a C-terminal domain which is involved in cell signaling, through phosphorylations and protein-protein interactions. Modulates signaling in ERK, Src and NF-kappa-B pathways. In activated T-cells, influences directly or indirectly the Ras/MAPK pathway. Promotes tumor progression. Regulates P53-mediated transcription and determines cell fate in the genotoxic stress response. Binds, together with KLF4, the PE21 promoter element of P53 and represses P53 activity (By similarity).</text>
</comment>
<comment type="subunit">
    <text evidence="1">The alpha subunit forms a tight, non-covalent heterodimeric complex with the proteolytically-released beta subunit. Binds directly the SH2 domain of GRB2, and forms a MUC1/GRB2/SOS1 complex involved in RAS signaling. The cytoplasmic tail (MUC1CT) interacts with several proteins such as, SRC, CTNNB1 and ERBs. Interaction with the SH2 domain of CSK decreases interaction with GSK3B. Interacts with CTNNB1/beta-catenin and JUP/gamma-catenin and promotes cell adhesion. Interaction with JUP/gamma-catenin is induced by heregulin. Binds PRKCD, ERBB2, ERBB3 and ERBB4. Heregulin (HRG) stimulates the interaction with ERBB2 and, to a much lesser extent, the interaction with ERBB3 and ERBB4. Interacts with P53 in response to DNA damage. Interacts with KLF4. Interacts with estrogen receptor alpha/ESR1, through its DNA-binding domain, and stimulates its transcription activity. Binds ADAM17 (By similarity).</text>
</comment>
<comment type="subcellular location">
    <subcellularLocation>
        <location>Apical cell membrane</location>
        <topology>Single-pass type I membrane protein</topology>
    </subcellularLocation>
    <text evidence="1">Exclusively located in the apical domain of the plasma membrane of highly polarized epithelial cells. After endocytosis, internalized and recycled to the cell membrane (By similarity).</text>
</comment>
<comment type="subcellular location">
    <molecule>Mucin-1 subunit beta</molecule>
    <subcellularLocation>
        <location>Cell membrane</location>
    </subcellularLocation>
    <subcellularLocation>
        <location>Cytoplasm</location>
    </subcellularLocation>
    <subcellularLocation>
        <location>Nucleus</location>
    </subcellularLocation>
    <text evidence="1">On EGF and PDGFRB stimulation, transported to the nucleus through interaction with CTNNB1, a process which is stimulated by phosphorylation. On HRG stimulation, colocalizes with JUP/gamma-catenin at the nucleus (By similarity).</text>
</comment>
<comment type="tissue specificity">
    <text>Expressed on the apical surface of epithelia cells, and on the milk fat globule membrane (MGGM).</text>
</comment>
<comment type="PTM">
    <text evidence="6 7">Highly glycosylated (N- and O-linked carbohydrates and sialic acid). O-linked glycosylation consists mainly of GalNAc, galactose, and sialic acid. The ratio from pools of milk from different dairy breeds is GalNAc: GlcNAc:galactose:mannose:sialic acid is 14:1:10:1:15.</text>
</comment>
<comment type="PTM">
    <text evidence="1">Proteolytic cleavage in the SEA domain occurs in the endoplasmic reticulum by an autoproteolytic mechanism and requires the full-length SEA domain as well as requiring a Ser, Thr or Cys residue at the P + 1 site. Ectodomain shedding is mediated by ADAM17 in uterine epithelial cells (By similarity).</text>
</comment>
<comment type="PTM">
    <text evidence="1">Dual palmitoylation on cysteine residues in the CQC motif is required for recycling from endosomes back to the plasma membrane.</text>
</comment>
<comment type="PTM">
    <text evidence="1">Phosphorylated on tyrosines and serine residues in the C-terminal. Phosphorylation on tyrosines in the C-terminal increases the nuclear location of MUC1 and beta-catenin. Phosphorylation by PKC delta induces binding of MUC1 to beta-catenin/CTNNB1 and thus decreases the formation of the beta-catenin/E-cadherin complex. Src-mediated phosphorylation inhibits interaction with GSK3B. Csk- or Src- or EGFR-mediated phosphorylation on Tyr-556 increases binding to beta-catenin/CTNNB1. GSK3B-mediated phosphorylation on Ser-554 decreases this interaction but restores the formation of the beta-cadherin/E-cadherin complex. On T-cell receptor activation, phosphorylated by LCK. PDGFR-mediated phosphorylation increases nuclear colocalization of MUC1CT and CTNNB1 (By similarity).</text>
</comment>
<comment type="caution">
    <text evidence="8">O-glycosylation sites are annotated in first sequence repeat only. Residues at similar position are probably glycosylated in all repeats.</text>
</comment>
<feature type="signal peptide" evidence="6">
    <location>
        <begin position="1"/>
        <end position="22"/>
    </location>
</feature>
<feature type="chain" id="PRO_5000067900" description="Mucin-1">
    <location>
        <begin position="23"/>
        <end position="580"/>
    </location>
</feature>
<feature type="chain" id="PRO_0000316161" description="Mucin-1 subunit alpha" evidence="1">
    <location>
        <begin position="23"/>
        <end position="426"/>
    </location>
</feature>
<feature type="chain" id="PRO_0000316162" description="Mucin-1 subunit beta" evidence="1">
    <location>
        <begin position="427"/>
        <end position="580"/>
    </location>
</feature>
<feature type="topological domain" description="Extracellular" evidence="3">
    <location>
        <begin position="23"/>
        <end position="489"/>
    </location>
</feature>
<feature type="transmembrane region" description="Helical" evidence="3">
    <location>
        <begin position="490"/>
        <end position="510"/>
    </location>
</feature>
<feature type="topological domain" description="Cytoplasmic" evidence="3">
    <location>
        <begin position="511"/>
        <end position="580"/>
    </location>
</feature>
<feature type="repeat" description="1">
    <location>
        <begin position="70"/>
        <end position="89"/>
    </location>
</feature>
<feature type="repeat" description="2">
    <location>
        <begin position="90"/>
        <end position="109"/>
    </location>
</feature>
<feature type="repeat" description="3">
    <location>
        <begin position="110"/>
        <end position="129"/>
    </location>
</feature>
<feature type="repeat" description="4">
    <location>
        <begin position="130"/>
        <end position="149"/>
    </location>
</feature>
<feature type="repeat" description="5">
    <location>
        <begin position="150"/>
        <end position="169"/>
    </location>
</feature>
<feature type="repeat" description="6">
    <location>
        <begin position="170"/>
        <end position="189"/>
    </location>
</feature>
<feature type="repeat" description="7">
    <location>
        <begin position="190"/>
        <end position="209"/>
    </location>
</feature>
<feature type="repeat" description="8">
    <location>
        <begin position="210"/>
        <end position="229"/>
    </location>
</feature>
<feature type="repeat" description="9">
    <location>
        <begin position="230"/>
        <end position="249"/>
    </location>
</feature>
<feature type="repeat" description="10">
    <location>
        <begin position="250"/>
        <end position="269"/>
    </location>
</feature>
<feature type="repeat" description="11">
    <location>
        <begin position="270"/>
        <end position="289"/>
    </location>
</feature>
<feature type="domain" description="SEA" evidence="4">
    <location>
        <begin position="368"/>
        <end position="475"/>
    </location>
</feature>
<feature type="region of interest" description="Disordered" evidence="5">
    <location>
        <begin position="28"/>
        <end position="359"/>
    </location>
</feature>
<feature type="region of interest" description="11 X 20 AA approximate tandem repeats of P-A-P-S-P-A-A-S-P-G-H-D-G-A-S-T-P-T-S-S">
    <location>
        <begin position="70"/>
        <end position="289"/>
    </location>
</feature>
<feature type="region of interest" description="Interaction with P53" evidence="1">
    <location>
        <begin position="519"/>
        <end position="555"/>
    </location>
</feature>
<feature type="region of interest" description="Disordered" evidence="5">
    <location>
        <begin position="544"/>
        <end position="563"/>
    </location>
</feature>
<feature type="region of interest" description="Required for interaction with GSK3B" evidence="1">
    <location>
        <begin position="550"/>
        <end position="557"/>
    </location>
</feature>
<feature type="region of interest" description="Required for interaction with beta- and gamma-catenins" evidence="1">
    <location>
        <begin position="560"/>
        <end position="568"/>
    </location>
</feature>
<feature type="short sequence motif" description="Interaction with GRB2" evidence="1">
    <location>
        <begin position="530"/>
        <end position="533"/>
    </location>
</feature>
<feature type="short sequence motif" description="Interaction with SRC and ESR1" evidence="1">
    <location>
        <begin position="556"/>
        <end position="559"/>
    </location>
</feature>
<feature type="short sequence motif" description="Required for interaction with AP1S2" evidence="1">
    <location>
        <begin position="570"/>
        <end position="572"/>
    </location>
</feature>
<feature type="compositionally biased region" description="Polar residues" evidence="5">
    <location>
        <begin position="28"/>
        <end position="37"/>
    </location>
</feature>
<feature type="compositionally biased region" description="Low complexity" evidence="5">
    <location>
        <begin position="38"/>
        <end position="88"/>
    </location>
</feature>
<feature type="compositionally biased region" description="Low complexity" evidence="5">
    <location>
        <begin position="96"/>
        <end position="108"/>
    </location>
</feature>
<feature type="compositionally biased region" description="Low complexity" evidence="5">
    <location>
        <begin position="116"/>
        <end position="128"/>
    </location>
</feature>
<feature type="compositionally biased region" description="Low complexity" evidence="5">
    <location>
        <begin position="136"/>
        <end position="148"/>
    </location>
</feature>
<feature type="compositionally biased region" description="Low complexity" evidence="5">
    <location>
        <begin position="156"/>
        <end position="168"/>
    </location>
</feature>
<feature type="compositionally biased region" description="Low complexity" evidence="5">
    <location>
        <begin position="176"/>
        <end position="188"/>
    </location>
</feature>
<feature type="compositionally biased region" description="Low complexity" evidence="5">
    <location>
        <begin position="196"/>
        <end position="208"/>
    </location>
</feature>
<feature type="compositionally biased region" description="Low complexity" evidence="5">
    <location>
        <begin position="216"/>
        <end position="228"/>
    </location>
</feature>
<feature type="compositionally biased region" description="Low complexity" evidence="5">
    <location>
        <begin position="236"/>
        <end position="248"/>
    </location>
</feature>
<feature type="compositionally biased region" description="Low complexity" evidence="5">
    <location>
        <begin position="256"/>
        <end position="306"/>
    </location>
</feature>
<feature type="compositionally biased region" description="Polar residues" evidence="5">
    <location>
        <begin position="308"/>
        <end position="344"/>
    </location>
</feature>
<feature type="compositionally biased region" description="Low complexity" evidence="5">
    <location>
        <begin position="345"/>
        <end position="357"/>
    </location>
</feature>
<feature type="site" description="Cleavage; by autolysis" evidence="1">
    <location>
        <begin position="426"/>
        <end position="427"/>
    </location>
</feature>
<feature type="modified residue" description="Phosphotyrosine; by PDGFR" evidence="2">
    <location>
        <position position="530"/>
    </location>
</feature>
<feature type="modified residue" description="Phosphotyrosine" evidence="2">
    <location>
        <position position="539"/>
    </location>
</feature>
<feature type="modified residue" description="Phosphotyrosine; by PDGFR" evidence="2">
    <location>
        <position position="545"/>
    </location>
</feature>
<feature type="modified residue" description="Phosphothreonine; by PKC/PRKCD" evidence="2">
    <location>
        <position position="551"/>
    </location>
</feature>
<feature type="modified residue" description="Phosphoserine; by GSK3-beta" evidence="2">
    <location>
        <position position="554"/>
    </location>
</feature>
<feature type="modified residue" description="Phosphotyrosine; by CSK, EGFR and SRC" evidence="2">
    <location>
        <position position="556"/>
    </location>
</feature>
<feature type="modified residue" description="Phosphotyrosine" evidence="2">
    <location>
        <position position="570"/>
    </location>
</feature>
<feature type="lipid moiety-binding region" description="S-palmitoyl cysteine" evidence="1">
    <location>
        <position position="511"/>
    </location>
</feature>
<feature type="lipid moiety-binding region" description="S-palmitoyl cysteine" evidence="1">
    <location>
        <position position="513"/>
    </location>
</feature>
<feature type="glycosylation site" description="O-linked (GalNAc...) serine" evidence="3">
    <location>
        <position position="73"/>
    </location>
</feature>
<feature type="glycosylation site" description="O-linked (GalNAc...) serine" evidence="3">
    <location>
        <position position="77"/>
    </location>
</feature>
<feature type="glycosylation site" description="O-linked (GalNAc...) serine" evidence="3">
    <location>
        <position position="84"/>
    </location>
</feature>
<feature type="glycosylation site" description="O-linked (GalNAc...) threonine" evidence="3">
    <location>
        <position position="85"/>
    </location>
</feature>
<feature type="glycosylation site" description="O-linked (GalNAc...) threonine" evidence="3">
    <location>
        <position position="87"/>
    </location>
</feature>
<feature type="glycosylation site" description="O-linked (GalNAc...) serine" evidence="3">
    <location>
        <position position="88"/>
    </location>
</feature>
<feature type="glycosylation site" description="O-linked (GalNAc...) serine" evidence="3">
    <location>
        <position position="89"/>
    </location>
</feature>
<feature type="glycosylation site" description="N-linked (GlcNAc...) asparagine" evidence="3">
    <location>
        <position position="161"/>
    </location>
</feature>
<feature type="glycosylation site" description="N-linked (GlcNAc...) asparagine" evidence="3">
    <location>
        <position position="201"/>
    </location>
</feature>
<feature type="glycosylation site" description="N-linked (GlcNAc...) asparagine" evidence="3">
    <location>
        <position position="241"/>
    </location>
</feature>
<feature type="glycosylation site" description="N-linked (GlcNAc...) asparagine" evidence="3">
    <location>
        <position position="384"/>
    </location>
</feature>
<feature type="glycosylation site" description="N-linked (GlcNAc...) asparagine" evidence="3">
    <location>
        <position position="460"/>
    </location>
</feature>
<dbReference type="EMBL" id="AJ400824">
    <property type="protein sequence ID" value="CAC81810.1"/>
    <property type="molecule type" value="mRNA"/>
</dbReference>
<dbReference type="EMBL" id="AF399757">
    <property type="protein sequence ID" value="AAL28023.1"/>
    <property type="molecule type" value="Genomic_DNA"/>
</dbReference>
<dbReference type="RefSeq" id="NP_776540.1">
    <property type="nucleotide sequence ID" value="NM_174115.2"/>
</dbReference>
<dbReference type="SMR" id="Q8WML4"/>
<dbReference type="STRING" id="9913.ENSBTAP00000065814"/>
<dbReference type="GlyCosmos" id="Q8WML4">
    <property type="glycosylation" value="12 sites, No reported glycans"/>
</dbReference>
<dbReference type="GlyGen" id="Q8WML4">
    <property type="glycosylation" value="12 sites"/>
</dbReference>
<dbReference type="PaxDb" id="9913-ENSBTAP00000014051"/>
<dbReference type="GeneID" id="281333"/>
<dbReference type="KEGG" id="bta:281333"/>
<dbReference type="CTD" id="4582"/>
<dbReference type="eggNOG" id="ENOG502QWCT">
    <property type="taxonomic scope" value="Eukaryota"/>
</dbReference>
<dbReference type="HOGENOM" id="CLU_029446_1_0_1"/>
<dbReference type="InParanoid" id="Q8WML4"/>
<dbReference type="OrthoDB" id="9909831at2759"/>
<dbReference type="TreeFam" id="TF336301"/>
<dbReference type="Proteomes" id="UP000009136">
    <property type="component" value="Unplaced"/>
</dbReference>
<dbReference type="GO" id="GO:0016324">
    <property type="term" value="C:apical plasma membrane"/>
    <property type="evidence" value="ECO:0000318"/>
    <property type="project" value="GO_Central"/>
</dbReference>
<dbReference type="GO" id="GO:0005737">
    <property type="term" value="C:cytoplasm"/>
    <property type="evidence" value="ECO:0007669"/>
    <property type="project" value="UniProtKB-SubCell"/>
</dbReference>
<dbReference type="GO" id="GO:0005634">
    <property type="term" value="C:nucleus"/>
    <property type="evidence" value="ECO:0007669"/>
    <property type="project" value="UniProtKB-SubCell"/>
</dbReference>
<dbReference type="Gene3D" id="6.10.140.600">
    <property type="match status" value="1"/>
</dbReference>
<dbReference type="InterPro" id="IPR000082">
    <property type="entry name" value="SEA_dom"/>
</dbReference>
<dbReference type="InterPro" id="IPR036364">
    <property type="entry name" value="SEA_dom_sf"/>
</dbReference>
<dbReference type="PANTHER" id="PTHR10006:SF19">
    <property type="entry name" value="MUCIN-1"/>
    <property type="match status" value="1"/>
</dbReference>
<dbReference type="PANTHER" id="PTHR10006">
    <property type="entry name" value="MUCIN-1-RELATED"/>
    <property type="match status" value="1"/>
</dbReference>
<dbReference type="Pfam" id="PF01390">
    <property type="entry name" value="SEA"/>
    <property type="match status" value="1"/>
</dbReference>
<dbReference type="PRINTS" id="PR01217">
    <property type="entry name" value="PRICHEXTENSN"/>
</dbReference>
<dbReference type="SMART" id="SM00200">
    <property type="entry name" value="SEA"/>
    <property type="match status" value="1"/>
</dbReference>
<dbReference type="SUPFAM" id="SSF82671">
    <property type="entry name" value="SEA domain"/>
    <property type="match status" value="1"/>
</dbReference>
<dbReference type="PROSITE" id="PS50024">
    <property type="entry name" value="SEA"/>
    <property type="match status" value="1"/>
</dbReference>
<sequence length="580" mass="58092">MTPDIQAPFLSLLLLFPVLTVANVPTLTTSDSINPRRTTPVSTTQSSPTSSPTKETSWSTTTTLLTASSPAPSPAASPGHDGASTPTSSPAPSPAASPGHDGASTPTSSPAPSPAASPGHDGASTPTSSPAPSPAASPGHDGASTPTSSPAPSPAASPGHNGTSSPTGSPAPSPAASPGHDGASTPTSSPAPSPAASPGHNGTSSPTGSPAPSPAASPGHDGASTPTSSPAPSPAASPGHNGTSSPTGSPAPSPTASPGHDSAPSLTSSPAPSPTASPGQHGASSPTSSDTSSMTTRSMSSSMVTSAHKGTSSRATMTPVSKGTPSSVPSSETAPTAASHITRTAASSPSIALSTSSNPKTSQQLSVRVSLYFLSFRITNLQFNSSLENPQTSYYQELQRSIWGLILQIYKQRDFLGLSEIKFRPGSVVVELTLAFREGTTAEWVKAQFSQLEAHAASYNLTISGVSVYSAPFPSSAQAGSGVPGWGIALLVLVCVLVALAIIYLIALVVCQCGRKKCEQLDVFPTLDAYHPMSEYSTYHTHGRYVPPGSTKRSPYEEVSAGNGGSNLSYTNLAATSANL</sequence>
<organism>
    <name type="scientific">Bos taurus</name>
    <name type="common">Bovine</name>
    <dbReference type="NCBI Taxonomy" id="9913"/>
    <lineage>
        <taxon>Eukaryota</taxon>
        <taxon>Metazoa</taxon>
        <taxon>Chordata</taxon>
        <taxon>Craniata</taxon>
        <taxon>Vertebrata</taxon>
        <taxon>Euteleostomi</taxon>
        <taxon>Mammalia</taxon>
        <taxon>Eutheria</taxon>
        <taxon>Laurasiatheria</taxon>
        <taxon>Artiodactyla</taxon>
        <taxon>Ruminantia</taxon>
        <taxon>Pecora</taxon>
        <taxon>Bovidae</taxon>
        <taxon>Bovinae</taxon>
        <taxon>Bos</taxon>
    </lineage>
</organism>